<sequence length="867" mass="98496">MVSRSCANFLDLASWDLLDFPQTQRALPRVMTVPGIISELDGGYSDGSSDVNSSNSSRERKIIVANMLPLQAKRDTETGQWCFSWDEDSLLLQLRDGFSSDTEFVYIGSLNADIGISEQEEVSHKLLLDFNCVPTFLPKEMQEKFYLGFCKHHLWPLFHYMLPMFPDHGDRFDRRLWQAYVSANKIFSDRVMEVINPEEDYVWIHDYHLMVLPTFLRKRFNRIKLGFFLHSPFPSSEIYRTLPVRDDLLRGLLNCDLIGFHTFDYARHFLSCCSRMLGLDYESKRGHIGLDYFGRTVFIKILPVGIHMGRLESVLNLPSTAAKMKEIQEQFKGKKLILGVDDMDIFKGISLKLIAMERLFETYWHMRGKLVLIQIVNPARATGKDVEEAKKETYSTAKRINERYGSAGYQPVILIDRLVPRYEKTAYYAMADCCLVNAVRDGMNLVPYKYIICRQGTPGMDKAMGISHDSARTSMLVVSEFIGCSPSLSGAIRVNPWDVDAVAEAVNLALTMGETEKRLRHEKHYHYVSTHDVGYWAKSFMQDLERACREHYNKRCWGIGFGLSFRVLSLSPSFRKLSIDHIVSTYRNTQRRAIFLDYDGTLVPESSIIKTPNAEVLSVLKSLCGDPKNTVFVVSGRGWESLSDWLSPCENLGIAAEHGYFIRWSSKKEWETCYSSAEAEWKTMVEPVMRSYMDATDGSTIEYKESALVWHHQDADPDFGACQAKELLDHLESVLANEPVVVKRGQHIVEVKPQGVSKGLAVEKVIHQMVEDGNPPDMVMCIGDDRSDEDMFESILSTVTNPDLPMPPEIFACTVGRKPSKAKYFLDDVSDVLKLLGGLAAATSSSKPEYQQQSSSLHTQVAFESII</sequence>
<protein>
    <recommendedName>
        <fullName>Probable alpha,alpha-trehalose-phosphate synthase [UDP-forming] 9</fullName>
        <ecNumber>2.4.1.15</ecNumber>
    </recommendedName>
    <alternativeName>
        <fullName>Trehalose-6-phosphate synthase 9</fullName>
        <shortName>AtTPS9</shortName>
    </alternativeName>
</protein>
<gene>
    <name type="primary">TPS9</name>
    <name type="ordered locus">At1g23870</name>
    <name type="ORF">T23E23.3</name>
</gene>
<accession>Q9LRA7</accession>
<proteinExistence type="evidence at transcript level"/>
<keyword id="KW-0328">Glycosyltransferase</keyword>
<keyword id="KW-0597">Phosphoprotein</keyword>
<keyword id="KW-1185">Reference proteome</keyword>
<keyword id="KW-0808">Transferase</keyword>
<dbReference type="EC" id="2.4.1.15"/>
<dbReference type="EMBL" id="AC002423">
    <property type="protein sequence ID" value="AAF87136.1"/>
    <property type="molecule type" value="Genomic_DNA"/>
</dbReference>
<dbReference type="EMBL" id="CP002684">
    <property type="protein sequence ID" value="AEE30444.1"/>
    <property type="molecule type" value="Genomic_DNA"/>
</dbReference>
<dbReference type="EMBL" id="AY072210">
    <property type="protein sequence ID" value="AAL60031.1"/>
    <property type="molecule type" value="mRNA"/>
</dbReference>
<dbReference type="EMBL" id="AY096366">
    <property type="protein sequence ID" value="AAM20007.1"/>
    <property type="molecule type" value="mRNA"/>
</dbReference>
<dbReference type="RefSeq" id="NP_173799.1">
    <property type="nucleotide sequence ID" value="NM_102235.2"/>
</dbReference>
<dbReference type="SMR" id="Q9LRA7"/>
<dbReference type="FunCoup" id="Q9LRA7">
    <property type="interactions" value="451"/>
</dbReference>
<dbReference type="IntAct" id="Q9LRA7">
    <property type="interactions" value="9"/>
</dbReference>
<dbReference type="STRING" id="3702.Q9LRA7"/>
<dbReference type="CAZy" id="GT20">
    <property type="family name" value="Glycosyltransferase Family 20"/>
</dbReference>
<dbReference type="iPTMnet" id="Q9LRA7"/>
<dbReference type="PaxDb" id="3702-AT1G23870.1"/>
<dbReference type="ProteomicsDB" id="228385"/>
<dbReference type="EnsemblPlants" id="AT1G23870.1">
    <property type="protein sequence ID" value="AT1G23870.1"/>
    <property type="gene ID" value="AT1G23870"/>
</dbReference>
<dbReference type="GeneID" id="838998"/>
<dbReference type="Gramene" id="AT1G23870.1">
    <property type="protein sequence ID" value="AT1G23870.1"/>
    <property type="gene ID" value="AT1G23870"/>
</dbReference>
<dbReference type="KEGG" id="ath:AT1G23870"/>
<dbReference type="Araport" id="AT1G23870"/>
<dbReference type="TAIR" id="AT1G23870">
    <property type="gene designation" value="TPS9"/>
</dbReference>
<dbReference type="eggNOG" id="KOG1050">
    <property type="taxonomic scope" value="Eukaryota"/>
</dbReference>
<dbReference type="HOGENOM" id="CLU_002351_3_1_1"/>
<dbReference type="InParanoid" id="Q9LRA7"/>
<dbReference type="OMA" id="TSWDKRR"/>
<dbReference type="PhylomeDB" id="Q9LRA7"/>
<dbReference type="PRO" id="PR:Q9LRA7"/>
<dbReference type="Proteomes" id="UP000006548">
    <property type="component" value="Chromosome 1"/>
</dbReference>
<dbReference type="ExpressionAtlas" id="Q9LRA7">
    <property type="expression patterns" value="baseline and differential"/>
</dbReference>
<dbReference type="GO" id="GO:0016757">
    <property type="term" value="F:glycosyltransferase activity"/>
    <property type="evidence" value="ECO:0007669"/>
    <property type="project" value="UniProtKB-KW"/>
</dbReference>
<dbReference type="GO" id="GO:0005992">
    <property type="term" value="P:trehalose biosynthetic process"/>
    <property type="evidence" value="ECO:0007669"/>
    <property type="project" value="InterPro"/>
</dbReference>
<dbReference type="CDD" id="cd03788">
    <property type="entry name" value="GT20_TPS"/>
    <property type="match status" value="1"/>
</dbReference>
<dbReference type="CDD" id="cd01627">
    <property type="entry name" value="HAD_TPP"/>
    <property type="match status" value="1"/>
</dbReference>
<dbReference type="FunFam" id="3.40.50.2000:FF:000010">
    <property type="entry name" value="Alpha,alpha-trehalose-phosphate synthase"/>
    <property type="match status" value="1"/>
</dbReference>
<dbReference type="FunFam" id="3.40.50.1000:FF:000052">
    <property type="entry name" value="Alpha,alpha-trehalose-phosphate synthase [UDP-forming] 6"/>
    <property type="match status" value="1"/>
</dbReference>
<dbReference type="FunFam" id="3.40.50.1000:FF:000054">
    <property type="entry name" value="alpha,alpha-trehalose-phosphate synthase [UDP-forming] 6"/>
    <property type="match status" value="1"/>
</dbReference>
<dbReference type="FunFam" id="3.40.50.2000:FF:000017">
    <property type="entry name" value="alpha,alpha-trehalose-phosphate synthase [UDP-forming] 6"/>
    <property type="match status" value="1"/>
</dbReference>
<dbReference type="FunFam" id="3.30.70.1020:FF:000002">
    <property type="entry name" value="Trehalose-6-phosphate synthase 2"/>
    <property type="match status" value="1"/>
</dbReference>
<dbReference type="Gene3D" id="3.40.50.2000">
    <property type="entry name" value="Glycogen Phosphorylase B"/>
    <property type="match status" value="2"/>
</dbReference>
<dbReference type="Gene3D" id="3.40.50.1000">
    <property type="entry name" value="HAD superfamily/HAD-like"/>
    <property type="match status" value="2"/>
</dbReference>
<dbReference type="InterPro" id="IPR001830">
    <property type="entry name" value="Glyco_trans_20"/>
</dbReference>
<dbReference type="InterPro" id="IPR036412">
    <property type="entry name" value="HAD-like_sf"/>
</dbReference>
<dbReference type="InterPro" id="IPR006379">
    <property type="entry name" value="HAD-SF_hydro_IIB"/>
</dbReference>
<dbReference type="InterPro" id="IPR023214">
    <property type="entry name" value="HAD_sf"/>
</dbReference>
<dbReference type="InterPro" id="IPR003337">
    <property type="entry name" value="Trehalose_PPase"/>
</dbReference>
<dbReference type="NCBIfam" id="TIGR01484">
    <property type="entry name" value="HAD-SF-IIB"/>
    <property type="match status" value="1"/>
</dbReference>
<dbReference type="NCBIfam" id="TIGR00685">
    <property type="entry name" value="T6PP"/>
    <property type="match status" value="1"/>
</dbReference>
<dbReference type="PANTHER" id="PTHR10788:SF14">
    <property type="entry name" value="ALPHA,ALPHA-TREHALOSE-PHOSPHATE SYNTHASE [UDP-FORMING] 9-RELATED"/>
    <property type="match status" value="1"/>
</dbReference>
<dbReference type="PANTHER" id="PTHR10788">
    <property type="entry name" value="TREHALOSE-6-PHOSPHATE SYNTHASE"/>
    <property type="match status" value="1"/>
</dbReference>
<dbReference type="Pfam" id="PF00982">
    <property type="entry name" value="Glyco_transf_20"/>
    <property type="match status" value="1"/>
</dbReference>
<dbReference type="Pfam" id="PF02358">
    <property type="entry name" value="Trehalose_PPase"/>
    <property type="match status" value="1"/>
</dbReference>
<dbReference type="SUPFAM" id="SSF56784">
    <property type="entry name" value="HAD-like"/>
    <property type="match status" value="1"/>
</dbReference>
<dbReference type="SUPFAM" id="SSF53756">
    <property type="entry name" value="UDP-Glycosyltransferase/glycogen phosphorylase"/>
    <property type="match status" value="1"/>
</dbReference>
<organism>
    <name type="scientific">Arabidopsis thaliana</name>
    <name type="common">Mouse-ear cress</name>
    <dbReference type="NCBI Taxonomy" id="3702"/>
    <lineage>
        <taxon>Eukaryota</taxon>
        <taxon>Viridiplantae</taxon>
        <taxon>Streptophyta</taxon>
        <taxon>Embryophyta</taxon>
        <taxon>Tracheophyta</taxon>
        <taxon>Spermatophyta</taxon>
        <taxon>Magnoliopsida</taxon>
        <taxon>eudicotyledons</taxon>
        <taxon>Gunneridae</taxon>
        <taxon>Pentapetalae</taxon>
        <taxon>rosids</taxon>
        <taxon>malvids</taxon>
        <taxon>Brassicales</taxon>
        <taxon>Brassicaceae</taxon>
        <taxon>Camelineae</taxon>
        <taxon>Arabidopsis</taxon>
    </lineage>
</organism>
<feature type="chain" id="PRO_0000324830" description="Probable alpha,alpha-trehalose-phosphate synthase [UDP-forming] 9">
    <location>
        <begin position="1"/>
        <end position="867"/>
    </location>
</feature>
<feature type="region of interest" description="Glycosyltransferase">
    <location>
        <begin position="59"/>
        <end position="546"/>
    </location>
</feature>
<feature type="modified residue" description="Phosphoserine" evidence="1">
    <location>
        <position position="5"/>
    </location>
</feature>
<feature type="modified residue" description="Phosphothreonine" evidence="1">
    <location>
        <position position="32"/>
    </location>
</feature>
<evidence type="ECO:0000250" key="1">
    <source>
        <dbReference type="UniProtKB" id="O23617"/>
    </source>
</evidence>
<evidence type="ECO:0000305" key="2"/>
<reference key="1">
    <citation type="journal article" date="2000" name="Nature">
        <title>Sequence and analysis of chromosome 1 of the plant Arabidopsis thaliana.</title>
        <authorList>
            <person name="Theologis A."/>
            <person name="Ecker J.R."/>
            <person name="Palm C.J."/>
            <person name="Federspiel N.A."/>
            <person name="Kaul S."/>
            <person name="White O."/>
            <person name="Alonso J."/>
            <person name="Altafi H."/>
            <person name="Araujo R."/>
            <person name="Bowman C.L."/>
            <person name="Brooks S.Y."/>
            <person name="Buehler E."/>
            <person name="Chan A."/>
            <person name="Chao Q."/>
            <person name="Chen H."/>
            <person name="Cheuk R.F."/>
            <person name="Chin C.W."/>
            <person name="Chung M.K."/>
            <person name="Conn L."/>
            <person name="Conway A.B."/>
            <person name="Conway A.R."/>
            <person name="Creasy T.H."/>
            <person name="Dewar K."/>
            <person name="Dunn P."/>
            <person name="Etgu P."/>
            <person name="Feldblyum T.V."/>
            <person name="Feng J.-D."/>
            <person name="Fong B."/>
            <person name="Fujii C.Y."/>
            <person name="Gill J.E."/>
            <person name="Goldsmith A.D."/>
            <person name="Haas B."/>
            <person name="Hansen N.F."/>
            <person name="Hughes B."/>
            <person name="Huizar L."/>
            <person name="Hunter J.L."/>
            <person name="Jenkins J."/>
            <person name="Johnson-Hopson C."/>
            <person name="Khan S."/>
            <person name="Khaykin E."/>
            <person name="Kim C.J."/>
            <person name="Koo H.L."/>
            <person name="Kremenetskaia I."/>
            <person name="Kurtz D.B."/>
            <person name="Kwan A."/>
            <person name="Lam B."/>
            <person name="Langin-Hooper S."/>
            <person name="Lee A."/>
            <person name="Lee J.M."/>
            <person name="Lenz C.A."/>
            <person name="Li J.H."/>
            <person name="Li Y.-P."/>
            <person name="Lin X."/>
            <person name="Liu S.X."/>
            <person name="Liu Z.A."/>
            <person name="Luros J.S."/>
            <person name="Maiti R."/>
            <person name="Marziali A."/>
            <person name="Militscher J."/>
            <person name="Miranda M."/>
            <person name="Nguyen M."/>
            <person name="Nierman W.C."/>
            <person name="Osborne B.I."/>
            <person name="Pai G."/>
            <person name="Peterson J."/>
            <person name="Pham P.K."/>
            <person name="Rizzo M."/>
            <person name="Rooney T."/>
            <person name="Rowley D."/>
            <person name="Sakano H."/>
            <person name="Salzberg S.L."/>
            <person name="Schwartz J.R."/>
            <person name="Shinn P."/>
            <person name="Southwick A.M."/>
            <person name="Sun H."/>
            <person name="Tallon L.J."/>
            <person name="Tambunga G."/>
            <person name="Toriumi M.J."/>
            <person name="Town C.D."/>
            <person name="Utterback T."/>
            <person name="Van Aken S."/>
            <person name="Vaysberg M."/>
            <person name="Vysotskaia V.S."/>
            <person name="Walker M."/>
            <person name="Wu D."/>
            <person name="Yu G."/>
            <person name="Fraser C.M."/>
            <person name="Venter J.C."/>
            <person name="Davis R.W."/>
        </authorList>
    </citation>
    <scope>NUCLEOTIDE SEQUENCE [LARGE SCALE GENOMIC DNA]</scope>
    <source>
        <strain>cv. Columbia</strain>
    </source>
</reference>
<reference key="2">
    <citation type="journal article" date="2017" name="Plant J.">
        <title>Araport11: a complete reannotation of the Arabidopsis thaliana reference genome.</title>
        <authorList>
            <person name="Cheng C.Y."/>
            <person name="Krishnakumar V."/>
            <person name="Chan A.P."/>
            <person name="Thibaud-Nissen F."/>
            <person name="Schobel S."/>
            <person name="Town C.D."/>
        </authorList>
    </citation>
    <scope>GENOME REANNOTATION</scope>
    <source>
        <strain>cv. Columbia</strain>
    </source>
</reference>
<reference key="3">
    <citation type="journal article" date="2003" name="Science">
        <title>Empirical analysis of transcriptional activity in the Arabidopsis genome.</title>
        <authorList>
            <person name="Yamada K."/>
            <person name="Lim J."/>
            <person name="Dale J.M."/>
            <person name="Chen H."/>
            <person name="Shinn P."/>
            <person name="Palm C.J."/>
            <person name="Southwick A.M."/>
            <person name="Wu H.C."/>
            <person name="Kim C.J."/>
            <person name="Nguyen M."/>
            <person name="Pham P.K."/>
            <person name="Cheuk R.F."/>
            <person name="Karlin-Newmann G."/>
            <person name="Liu S.X."/>
            <person name="Lam B."/>
            <person name="Sakano H."/>
            <person name="Wu T."/>
            <person name="Yu G."/>
            <person name="Miranda M."/>
            <person name="Quach H.L."/>
            <person name="Tripp M."/>
            <person name="Chang C.H."/>
            <person name="Lee J.M."/>
            <person name="Toriumi M.J."/>
            <person name="Chan M.M."/>
            <person name="Tang C.C."/>
            <person name="Onodera C.S."/>
            <person name="Deng J.M."/>
            <person name="Akiyama K."/>
            <person name="Ansari Y."/>
            <person name="Arakawa T."/>
            <person name="Banh J."/>
            <person name="Banno F."/>
            <person name="Bowser L."/>
            <person name="Brooks S.Y."/>
            <person name="Carninci P."/>
            <person name="Chao Q."/>
            <person name="Choy N."/>
            <person name="Enju A."/>
            <person name="Goldsmith A.D."/>
            <person name="Gurjal M."/>
            <person name="Hansen N.F."/>
            <person name="Hayashizaki Y."/>
            <person name="Johnson-Hopson C."/>
            <person name="Hsuan V.W."/>
            <person name="Iida K."/>
            <person name="Karnes M."/>
            <person name="Khan S."/>
            <person name="Koesema E."/>
            <person name="Ishida J."/>
            <person name="Jiang P.X."/>
            <person name="Jones T."/>
            <person name="Kawai J."/>
            <person name="Kamiya A."/>
            <person name="Meyers C."/>
            <person name="Nakajima M."/>
            <person name="Narusaka M."/>
            <person name="Seki M."/>
            <person name="Sakurai T."/>
            <person name="Satou M."/>
            <person name="Tamse R."/>
            <person name="Vaysberg M."/>
            <person name="Wallender E.K."/>
            <person name="Wong C."/>
            <person name="Yamamura Y."/>
            <person name="Yuan S."/>
            <person name="Shinozaki K."/>
            <person name="Davis R.W."/>
            <person name="Theologis A."/>
            <person name="Ecker J.R."/>
        </authorList>
    </citation>
    <scope>NUCLEOTIDE SEQUENCE [LARGE SCALE MRNA]</scope>
    <source>
        <strain>cv. Columbia</strain>
    </source>
</reference>
<reference key="4">
    <citation type="journal article" date="2001" name="Trends Plant Sci.">
        <title>An unexpected plethora of trehalose biosynthesis genes in Arabidopsis thaliana.</title>
        <authorList>
            <person name="Leyman B."/>
            <person name="Van Dijck P."/>
            <person name="Thevelein J.M."/>
        </authorList>
    </citation>
    <scope>GENE FAMILY</scope>
    <scope>NOMENCLATURE</scope>
</reference>
<name>TPS9_ARATH</name>
<comment type="catalytic activity">
    <reaction>
        <text>D-glucose 6-phosphate + UDP-alpha-D-glucose = alpha,alpha-trehalose 6-phosphate + UDP + H(+)</text>
        <dbReference type="Rhea" id="RHEA:18889"/>
        <dbReference type="ChEBI" id="CHEBI:15378"/>
        <dbReference type="ChEBI" id="CHEBI:58223"/>
        <dbReference type="ChEBI" id="CHEBI:58429"/>
        <dbReference type="ChEBI" id="CHEBI:58885"/>
        <dbReference type="ChEBI" id="CHEBI:61548"/>
        <dbReference type="EC" id="2.4.1.15"/>
    </reaction>
</comment>
<comment type="similarity">
    <text evidence="2">In the N-terminal section; belongs to the glycosyltransferase 20 family.</text>
</comment>
<comment type="similarity">
    <text evidence="2">In the C-terminal section; belongs to the trehalose phosphatase family.</text>
</comment>